<proteinExistence type="evidence at transcript level"/>
<accession>Q9ZV78</accession>
<reference key="1">
    <citation type="journal article" date="1999" name="Nature">
        <title>Sequence and analysis of chromosome 2 of the plant Arabidopsis thaliana.</title>
        <authorList>
            <person name="Lin X."/>
            <person name="Kaul S."/>
            <person name="Rounsley S.D."/>
            <person name="Shea T.P."/>
            <person name="Benito M.-I."/>
            <person name="Town C.D."/>
            <person name="Fujii C.Y."/>
            <person name="Mason T.M."/>
            <person name="Bowman C.L."/>
            <person name="Barnstead M.E."/>
            <person name="Feldblyum T.V."/>
            <person name="Buell C.R."/>
            <person name="Ketchum K.A."/>
            <person name="Lee J.J."/>
            <person name="Ronning C.M."/>
            <person name="Koo H.L."/>
            <person name="Moffat K.S."/>
            <person name="Cronin L.A."/>
            <person name="Shen M."/>
            <person name="Pai G."/>
            <person name="Van Aken S."/>
            <person name="Umayam L."/>
            <person name="Tallon L.J."/>
            <person name="Gill J.E."/>
            <person name="Adams M.D."/>
            <person name="Carrera A.J."/>
            <person name="Creasy T.H."/>
            <person name="Goodman H.M."/>
            <person name="Somerville C.R."/>
            <person name="Copenhaver G.P."/>
            <person name="Preuss D."/>
            <person name="Nierman W.C."/>
            <person name="White O."/>
            <person name="Eisen J.A."/>
            <person name="Salzberg S.L."/>
            <person name="Fraser C.M."/>
            <person name="Venter J.C."/>
        </authorList>
    </citation>
    <scope>NUCLEOTIDE SEQUENCE [LARGE SCALE GENOMIC DNA]</scope>
    <source>
        <strain>cv. Columbia</strain>
    </source>
</reference>
<reference key="2">
    <citation type="journal article" date="2017" name="Plant J.">
        <title>Araport11: a complete reannotation of the Arabidopsis thaliana reference genome.</title>
        <authorList>
            <person name="Cheng C.Y."/>
            <person name="Krishnakumar V."/>
            <person name="Chan A.P."/>
            <person name="Thibaud-Nissen F."/>
            <person name="Schobel S."/>
            <person name="Town C.D."/>
        </authorList>
    </citation>
    <scope>GENOME REANNOTATION</scope>
    <source>
        <strain>cv. Columbia</strain>
    </source>
</reference>
<reference key="3">
    <citation type="journal article" date="2005" name="Plant Physiol.">
        <title>Analysis of the cDNAs of hypothetical genes on Arabidopsis chromosome 2 reveals numerous transcript variants.</title>
        <authorList>
            <person name="Xiao Y.-L."/>
            <person name="Smith S.R."/>
            <person name="Ishmael N."/>
            <person name="Redman J.C."/>
            <person name="Kumar N."/>
            <person name="Monaghan E.L."/>
            <person name="Ayele M."/>
            <person name="Haas B.J."/>
            <person name="Wu H.C."/>
            <person name="Town C.D."/>
        </authorList>
    </citation>
    <scope>NUCLEOTIDE SEQUENCE [LARGE SCALE MRNA]</scope>
    <source>
        <strain>cv. Columbia</strain>
    </source>
</reference>
<sequence length="384" mass="43957">MTLPELPKDLVEEILSFVPATSLKRLRSTCKGWNRLFKDDKRFTRIHTEKAAKQFQPLTLTKNYRICPINVNLHGTTPSLEVKNEVSLLDPHSKNSAAQFNIDRVFHCDGLLLCTSQKDSRFVVWNPLTGVTKWIELGDRYNEGMAFILGYDNKSCNKSYKAMSFNYLDKDSEIYEFSSDSWRVIDDIIKPPHYMDYFRECFSLKGNTYWLGIDRRRRPPDLRITLIKFDFGTEKFGYVSLPPPCQVHGFEASNLSVVGDEKLSVLVQAGSTSKTEVWVTSKIGEANVVSWSKVLSLYPKPDVGFWHGLSFLLDEEKKVFLCCKSKGWMEEEDEDNVYIVGEDNKFILLNFGVETIGGESPIITTYVPSLVQIELAGSKRKTDY</sequence>
<evidence type="ECO:0000255" key="1">
    <source>
        <dbReference type="PROSITE-ProRule" id="PRU00080"/>
    </source>
</evidence>
<evidence type="ECO:0000305" key="2"/>
<name>FB100_ARATH</name>
<protein>
    <recommendedName>
        <fullName>F-box protein At2g07140</fullName>
    </recommendedName>
</protein>
<comment type="alternative products">
    <event type="alternative splicing"/>
    <isoform>
        <id>Q9ZV78-1</id>
        <name>1</name>
        <sequence type="displayed"/>
    </isoform>
    <text>A number of isoforms are produced. According to EST sequences.</text>
</comment>
<dbReference type="EMBL" id="AC005693">
    <property type="protein sequence ID" value="AAC69119.1"/>
    <property type="molecule type" value="Genomic_DNA"/>
</dbReference>
<dbReference type="EMBL" id="CP002685">
    <property type="protein sequence ID" value="AEC06036.1"/>
    <property type="molecule type" value="Genomic_DNA"/>
</dbReference>
<dbReference type="EMBL" id="AY227641">
    <property type="protein sequence ID" value="AAO73422.1"/>
    <property type="molecule type" value="mRNA"/>
</dbReference>
<dbReference type="PIR" id="G84482">
    <property type="entry name" value="G84482"/>
</dbReference>
<dbReference type="RefSeq" id="NP_001154501.1">
    <molecule id="Q9ZV78-1"/>
    <property type="nucleotide sequence ID" value="NM_001161029.2"/>
</dbReference>
<dbReference type="BioGRID" id="674">
    <property type="interactions" value="1"/>
</dbReference>
<dbReference type="FunCoup" id="Q9ZV78">
    <property type="interactions" value="2"/>
</dbReference>
<dbReference type="STRING" id="3702.Q9ZV78"/>
<dbReference type="PaxDb" id="3702-AT2G07140.1"/>
<dbReference type="EnsemblPlants" id="AT2G07140.2">
    <molecule id="Q9ZV78-1"/>
    <property type="protein sequence ID" value="AT2G07140.2"/>
    <property type="gene ID" value="AT2G07140"/>
</dbReference>
<dbReference type="GeneID" id="815283"/>
<dbReference type="Gramene" id="AT2G07140.2">
    <molecule id="Q9ZV78-1"/>
    <property type="protein sequence ID" value="AT2G07140.2"/>
    <property type="gene ID" value="AT2G07140"/>
</dbReference>
<dbReference type="KEGG" id="ath:AT2G07140"/>
<dbReference type="Araport" id="AT2G07140"/>
<dbReference type="TAIR" id="AT2G07140"/>
<dbReference type="HOGENOM" id="CLU_034692_0_0_1"/>
<dbReference type="InParanoid" id="Q9ZV78"/>
<dbReference type="OMA" id="HYLEYSR"/>
<dbReference type="PhylomeDB" id="Q9ZV78"/>
<dbReference type="PRO" id="PR:Q9ZV78"/>
<dbReference type="Proteomes" id="UP000006548">
    <property type="component" value="Chromosome 2"/>
</dbReference>
<dbReference type="ExpressionAtlas" id="Q9ZV78">
    <property type="expression patterns" value="baseline and differential"/>
</dbReference>
<dbReference type="CDD" id="cd22157">
    <property type="entry name" value="F-box_AtFBW1-like"/>
    <property type="match status" value="1"/>
</dbReference>
<dbReference type="Gene3D" id="1.20.1280.50">
    <property type="match status" value="1"/>
</dbReference>
<dbReference type="InterPro" id="IPR006527">
    <property type="entry name" value="F-box-assoc_dom_typ1"/>
</dbReference>
<dbReference type="InterPro" id="IPR017451">
    <property type="entry name" value="F-box-assoc_interact_dom"/>
</dbReference>
<dbReference type="InterPro" id="IPR036047">
    <property type="entry name" value="F-box-like_dom_sf"/>
</dbReference>
<dbReference type="InterPro" id="IPR001810">
    <property type="entry name" value="F-box_dom"/>
</dbReference>
<dbReference type="InterPro" id="IPR011043">
    <property type="entry name" value="Gal_Oxase/kelch_b-propeller"/>
</dbReference>
<dbReference type="InterPro" id="IPR050796">
    <property type="entry name" value="SCF_F-box_component"/>
</dbReference>
<dbReference type="NCBIfam" id="TIGR01640">
    <property type="entry name" value="F_box_assoc_1"/>
    <property type="match status" value="1"/>
</dbReference>
<dbReference type="PANTHER" id="PTHR31672">
    <property type="entry name" value="BNACNNG10540D PROTEIN"/>
    <property type="match status" value="1"/>
</dbReference>
<dbReference type="PANTHER" id="PTHR31672:SF13">
    <property type="entry name" value="F-BOX PROTEIN CPR30-LIKE"/>
    <property type="match status" value="1"/>
</dbReference>
<dbReference type="Pfam" id="PF00646">
    <property type="entry name" value="F-box"/>
    <property type="match status" value="1"/>
</dbReference>
<dbReference type="Pfam" id="PF07734">
    <property type="entry name" value="FBA_1"/>
    <property type="match status" value="1"/>
</dbReference>
<dbReference type="SMART" id="SM00256">
    <property type="entry name" value="FBOX"/>
    <property type="match status" value="1"/>
</dbReference>
<dbReference type="SUPFAM" id="SSF81383">
    <property type="entry name" value="F-box domain"/>
    <property type="match status" value="1"/>
</dbReference>
<dbReference type="SUPFAM" id="SSF50965">
    <property type="entry name" value="Galactose oxidase, central domain"/>
    <property type="match status" value="1"/>
</dbReference>
<dbReference type="PROSITE" id="PS50181">
    <property type="entry name" value="FBOX"/>
    <property type="match status" value="1"/>
</dbReference>
<feature type="chain" id="PRO_0000283373" description="F-box protein At2g07140">
    <location>
        <begin position="1"/>
        <end position="384"/>
    </location>
</feature>
<feature type="domain" description="F-box" evidence="1">
    <location>
        <begin position="1"/>
        <end position="46"/>
    </location>
</feature>
<feature type="sequence conflict" description="In Ref. 3; AAO73422." evidence="2" ref="3">
    <original>F</original>
    <variation>V</variation>
    <location>
        <position position="320"/>
    </location>
</feature>
<feature type="sequence conflict" description="In Ref. 3; AAO73422." evidence="2" ref="3">
    <original>D</original>
    <variation>E</variation>
    <location>
        <position position="335"/>
    </location>
</feature>
<feature type="sequence conflict" description="In Ref. 3; AAO73422." evidence="2" ref="3">
    <original>I</original>
    <variation>S</variation>
    <location>
        <position position="339"/>
    </location>
</feature>
<feature type="sequence conflict" description="In Ref. 3; AAO73422." evidence="2" ref="3">
    <original>N</original>
    <variation>T</variation>
    <location>
        <position position="344"/>
    </location>
</feature>
<feature type="sequence conflict" description="In Ref. 3; AAO73422." evidence="2" ref="3">
    <original>E</original>
    <variation>Q</variation>
    <location>
        <position position="354"/>
    </location>
</feature>
<feature type="sequence conflict" description="In Ref. 3; AAO73422." evidence="2" ref="3">
    <original>E</original>
    <variation>Y</variation>
    <location>
        <position position="359"/>
    </location>
</feature>
<feature type="sequence conflict" description="In Ref. 3; AAO73422." evidence="2" ref="3">
    <original>TT</original>
    <variation>VN</variation>
    <location>
        <begin position="364"/>
        <end position="365"/>
    </location>
</feature>
<feature type="sequence conflict" description="In Ref. 3; AAO73422." evidence="2" ref="3">
    <original>V</original>
    <variation>G</variation>
    <location>
        <position position="371"/>
    </location>
</feature>
<feature type="sequence conflict" description="In Ref. 3; AAO73422." evidence="2" ref="3">
    <original>T</original>
    <variation>R</variation>
    <location>
        <position position="382"/>
    </location>
</feature>
<organism>
    <name type="scientific">Arabidopsis thaliana</name>
    <name type="common">Mouse-ear cress</name>
    <dbReference type="NCBI Taxonomy" id="3702"/>
    <lineage>
        <taxon>Eukaryota</taxon>
        <taxon>Viridiplantae</taxon>
        <taxon>Streptophyta</taxon>
        <taxon>Embryophyta</taxon>
        <taxon>Tracheophyta</taxon>
        <taxon>Spermatophyta</taxon>
        <taxon>Magnoliopsida</taxon>
        <taxon>eudicotyledons</taxon>
        <taxon>Gunneridae</taxon>
        <taxon>Pentapetalae</taxon>
        <taxon>rosids</taxon>
        <taxon>malvids</taxon>
        <taxon>Brassicales</taxon>
        <taxon>Brassicaceae</taxon>
        <taxon>Camelineae</taxon>
        <taxon>Arabidopsis</taxon>
    </lineage>
</organism>
<keyword id="KW-0025">Alternative splicing</keyword>
<keyword id="KW-1185">Reference proteome</keyword>
<gene>
    <name type="ordered locus">At2g07140</name>
    <name type="ORF">T25N22.10</name>
</gene>